<keyword id="KW-0004">4Fe-4S</keyword>
<keyword id="KW-0227">DNA damage</keyword>
<keyword id="KW-0234">DNA repair</keyword>
<keyword id="KW-0238">DNA-binding</keyword>
<keyword id="KW-0408">Iron</keyword>
<keyword id="KW-0411">Iron-sulfur</keyword>
<keyword id="KW-0456">Lyase</keyword>
<keyword id="KW-0479">Metal-binding</keyword>
<keyword id="KW-0949">S-adenosyl-L-methionine</keyword>
<keyword id="KW-0749">Sporulation</keyword>
<protein>
    <recommendedName>
        <fullName>Spore photoproduct lyase</fullName>
        <ecNumber>4.1.99.14</ecNumber>
    </recommendedName>
</protein>
<proteinExistence type="evidence at protein level"/>
<feature type="chain" id="PRO_0000397845" description="Spore photoproduct lyase">
    <location>
        <begin position="1"/>
        <end position="341"/>
    </location>
</feature>
<feature type="domain" description="Radical SAM core" evidence="3">
    <location>
        <begin position="76"/>
        <end position="304"/>
    </location>
</feature>
<feature type="DNA-binding region" description="H-T-H motif" evidence="2">
    <location>
        <begin position="217"/>
        <end position="234"/>
    </location>
</feature>
<feature type="binding site" evidence="1">
    <location>
        <position position="90"/>
    </location>
    <ligand>
        <name>[4Fe-4S] cluster</name>
        <dbReference type="ChEBI" id="CHEBI:49883"/>
        <note>4Fe-4S-S-AdoMet</note>
    </ligand>
</feature>
<feature type="binding site" evidence="1">
    <location>
        <position position="94"/>
    </location>
    <ligand>
        <name>[4Fe-4S] cluster</name>
        <dbReference type="ChEBI" id="CHEBI:49883"/>
        <note>4Fe-4S-S-AdoMet</note>
    </ligand>
</feature>
<feature type="binding site" evidence="1">
    <location>
        <position position="97"/>
    </location>
    <ligand>
        <name>[4Fe-4S] cluster</name>
        <dbReference type="ChEBI" id="CHEBI:49883"/>
        <note>4Fe-4S-S-AdoMet</note>
    </ligand>
</feature>
<sequence>MKPFVPKLVYFEPEALSYPLGQELYEKFTQMGIEIRETTSHNQVRGIPGETELARYRNAKSTLVVGVRRTLKFDSSKPSAEYAIPLATGCMGHCHYCYLQTTLGSKPYIRVYVNLDDIFAQAQKYIDERAPEITRFEAACTSDIVGIDHLTHSLKKAIEFIGATDYGRLRFVTKYEHVDHLLDAKHNGKTRFRFSVNSRYVINHFEPGTSSFDARLQAARKVAGAGYKLGFVVAPIYRHDGWEQGYFELFQELARQLEGVDLSDLTFELIQHRFTKPAKRVIEQRYPKTKLDLDESKRKYKWGRYGIGKYVYRDKEARELEETMRSYIARFFPSAQVQYFT</sequence>
<comment type="function">
    <text evidence="4">Involved in repair of UV radiation-induced DNA damage during spore germination. Can repair thymine dimer 5-thyminyl-5,6-dihydrothymine (known as spore photoproduct (SP)) by in situ monomerization of SP to two thymines.</text>
</comment>
<comment type="catalytic activity">
    <reaction evidence="4">
        <text>(5R)-5,6-dihydro-5-(thymidin-7-yl)thymidine in DNA = a thymidine dimer in DNA</text>
        <dbReference type="Rhea" id="RHEA:56132"/>
        <dbReference type="Rhea" id="RHEA-COMP:14387"/>
        <dbReference type="Rhea" id="RHEA-COMP:14449"/>
        <dbReference type="ChEBI" id="CHEBI:139518"/>
        <dbReference type="ChEBI" id="CHEBI:139519"/>
        <dbReference type="EC" id="4.1.99.14"/>
    </reaction>
</comment>
<comment type="cofactor">
    <cofactor evidence="4">
        <name>[4Fe-4S] cluster</name>
        <dbReference type="ChEBI" id="CHEBI:49883"/>
    </cofactor>
    <text evidence="4">Binds 1 [4Fe-4S] cluster per subunit. The cluster is coordinated with 3 cysteines and an exchangeable S-adenosyl-L-methionine.</text>
</comment>
<comment type="cofactor">
    <cofactor evidence="4">
        <name>S-adenosyl-L-methionine</name>
        <dbReference type="ChEBI" id="CHEBI:59789"/>
    </cofactor>
    <text evidence="4">Binds 1 S-adenosyl-L-methionine per subunit.</text>
</comment>
<comment type="subunit">
    <text evidence="4">Monomer or homodimer.</text>
</comment>
<comment type="similarity">
    <text evidence="5">Belongs to the radical SAM superfamily. SPL family.</text>
</comment>
<name>SPL_GEOSY</name>
<accession>C9RZ55</accession>
<dbReference type="EC" id="4.1.99.14"/>
<dbReference type="EMBL" id="CP001794">
    <property type="protein sequence ID" value="ACX76924.1"/>
    <property type="molecule type" value="Genomic_DNA"/>
</dbReference>
<dbReference type="SMR" id="C9RZ55"/>
<dbReference type="KEGG" id="gyc:GYMC61_0226"/>
<dbReference type="HOGENOM" id="CLU_057301_0_0_9"/>
<dbReference type="GO" id="GO:0042601">
    <property type="term" value="C:endospore-forming forespore"/>
    <property type="evidence" value="ECO:0007669"/>
    <property type="project" value="InterPro"/>
</dbReference>
<dbReference type="GO" id="GO:0051539">
    <property type="term" value="F:4 iron, 4 sulfur cluster binding"/>
    <property type="evidence" value="ECO:0007669"/>
    <property type="project" value="UniProtKB-KW"/>
</dbReference>
<dbReference type="GO" id="GO:0003677">
    <property type="term" value="F:DNA binding"/>
    <property type="evidence" value="ECO:0007669"/>
    <property type="project" value="UniProtKB-KW"/>
</dbReference>
<dbReference type="GO" id="GO:0003913">
    <property type="term" value="F:DNA photolyase activity"/>
    <property type="evidence" value="ECO:0007669"/>
    <property type="project" value="InterPro"/>
</dbReference>
<dbReference type="GO" id="GO:0046872">
    <property type="term" value="F:metal ion binding"/>
    <property type="evidence" value="ECO:0007669"/>
    <property type="project" value="UniProtKB-KW"/>
</dbReference>
<dbReference type="GO" id="GO:1904047">
    <property type="term" value="F:S-adenosyl-L-methionine binding"/>
    <property type="evidence" value="ECO:0007669"/>
    <property type="project" value="InterPro"/>
</dbReference>
<dbReference type="GO" id="GO:0006281">
    <property type="term" value="P:DNA repair"/>
    <property type="evidence" value="ECO:0007669"/>
    <property type="project" value="UniProtKB-KW"/>
</dbReference>
<dbReference type="GO" id="GO:0030435">
    <property type="term" value="P:sporulation resulting in formation of a cellular spore"/>
    <property type="evidence" value="ECO:0007669"/>
    <property type="project" value="UniProtKB-KW"/>
</dbReference>
<dbReference type="CDD" id="cd01335">
    <property type="entry name" value="Radical_SAM"/>
    <property type="match status" value="1"/>
</dbReference>
<dbReference type="FunFam" id="3.40.50.12110:FF:000001">
    <property type="entry name" value="Spore photoproduct lyase"/>
    <property type="match status" value="1"/>
</dbReference>
<dbReference type="FunFam" id="3.80.30.30:FF:000001">
    <property type="entry name" value="Spore photoproduct lyase"/>
    <property type="match status" value="1"/>
</dbReference>
<dbReference type="Gene3D" id="3.40.50.12110">
    <property type="match status" value="1"/>
</dbReference>
<dbReference type="Gene3D" id="3.80.30.30">
    <property type="match status" value="1"/>
</dbReference>
<dbReference type="InterPro" id="IPR007197">
    <property type="entry name" value="rSAM"/>
</dbReference>
<dbReference type="InterPro" id="IPR049539">
    <property type="entry name" value="SPL"/>
</dbReference>
<dbReference type="InterPro" id="IPR034560">
    <property type="entry name" value="SPL_Bacilli"/>
</dbReference>
<dbReference type="InterPro" id="IPR023897">
    <property type="entry name" value="SPL_firmicutes"/>
</dbReference>
<dbReference type="NCBIfam" id="TIGR04070">
    <property type="entry name" value="photo_TT_lyase"/>
    <property type="match status" value="1"/>
</dbReference>
<dbReference type="PANTHER" id="PTHR37822:SF2">
    <property type="entry name" value="SPORE PHOTOPRODUCT LYASE"/>
    <property type="match status" value="1"/>
</dbReference>
<dbReference type="PANTHER" id="PTHR37822">
    <property type="entry name" value="SPORE PHOTOPRODUCT LYASE-RELATED"/>
    <property type="match status" value="1"/>
</dbReference>
<dbReference type="Pfam" id="PF20903">
    <property type="entry name" value="SPL"/>
    <property type="match status" value="1"/>
</dbReference>
<dbReference type="SFLD" id="SFLDF00292">
    <property type="entry name" value="spore_photoproduct_lyase_1"/>
    <property type="match status" value="1"/>
</dbReference>
<dbReference type="SFLD" id="SFLDG01079">
    <property type="entry name" value="spore_photoproduct_lyase_like"/>
    <property type="match status" value="1"/>
</dbReference>
<dbReference type="PROSITE" id="PS51918">
    <property type="entry name" value="RADICAL_SAM"/>
    <property type="match status" value="1"/>
</dbReference>
<evidence type="ECO:0000250" key="1"/>
<evidence type="ECO:0000255" key="2"/>
<evidence type="ECO:0000255" key="3">
    <source>
        <dbReference type="PROSITE-ProRule" id="PRU01266"/>
    </source>
</evidence>
<evidence type="ECO:0000269" key="4">
    <source>
    </source>
</evidence>
<evidence type="ECO:0000305" key="5"/>
<reference key="1">
    <citation type="submission" date="2009-10" db="EMBL/GenBank/DDBJ databases">
        <title>Complete sequence of chromosome of Geobacillus sp. Y412MC61.</title>
        <authorList>
            <consortium name="US DOE Joint Genome Institute"/>
            <person name="Lucas S."/>
            <person name="Copeland A."/>
            <person name="Lapidus A."/>
            <person name="Glavina del Rio T."/>
            <person name="Tice H."/>
            <person name="Bruce D."/>
            <person name="Goodwin L."/>
            <person name="Pitluck S."/>
            <person name="Chertkov O."/>
            <person name="Brettin T."/>
            <person name="Detter J.C."/>
            <person name="Han C."/>
            <person name="Larimer F."/>
            <person name="Land M."/>
            <person name="Hauser L."/>
            <person name="Kyrpides N."/>
            <person name="Mikhailova N."/>
            <person name="Brumm P."/>
            <person name="Mead D."/>
        </authorList>
    </citation>
    <scope>NUCLEOTIDE SEQUENCE [LARGE SCALE GENOMIC DNA]</scope>
    <source>
        <strain>Y412MC61</strain>
    </source>
</reference>
<reference key="2">
    <citation type="journal article" date="2006" name="J. Biol. Chem.">
        <title>Characterization of a new thermophilic spore photoproduct lyase from Geobacillus stearothermophilus (SplG) with defined lesion containing DNA substrates.</title>
        <authorList>
            <person name="Pieck J.C."/>
            <person name="Hennecke U."/>
            <person name="Pierik A.J."/>
            <person name="Friedel M.G."/>
            <person name="Carell T."/>
        </authorList>
    </citation>
    <scope>FUNCTION</scope>
    <scope>CATALYTIC ACTIVITY</scope>
    <scope>SUBUNIT</scope>
    <scope>COFACTOR</scope>
</reference>
<organism>
    <name type="scientific">Geobacillus sp. (strain Y412MC61)</name>
    <dbReference type="NCBI Taxonomy" id="544556"/>
    <lineage>
        <taxon>Bacteria</taxon>
        <taxon>Bacillati</taxon>
        <taxon>Bacillota</taxon>
        <taxon>Bacilli</taxon>
        <taxon>Bacillales</taxon>
        <taxon>Anoxybacillaceae</taxon>
        <taxon>Geobacillus</taxon>
    </lineage>
</organism>
<gene>
    <name type="primary">splG</name>
    <name type="ordered locus">GYMC61_0226</name>
</gene>